<gene>
    <name evidence="1" type="primary">pstB</name>
</gene>
<proteinExistence type="inferred from homology"/>
<feature type="chain" id="PRO_0000092841" description="Phosphate import ATP-binding protein PstB">
    <location>
        <begin position="1"/>
        <end position="285"/>
    </location>
</feature>
<feature type="domain" description="ABC transporter" evidence="1">
    <location>
        <begin position="22"/>
        <end position="262"/>
    </location>
</feature>
<feature type="region of interest" description="Disordered" evidence="2">
    <location>
        <begin position="266"/>
        <end position="285"/>
    </location>
</feature>
<feature type="compositionally biased region" description="Polar residues" evidence="2">
    <location>
        <begin position="272"/>
        <end position="285"/>
    </location>
</feature>
<feature type="binding site" evidence="1">
    <location>
        <begin position="54"/>
        <end position="61"/>
    </location>
    <ligand>
        <name>ATP</name>
        <dbReference type="ChEBI" id="CHEBI:30616"/>
    </ligand>
</feature>
<keyword id="KW-0067">ATP-binding</keyword>
<keyword id="KW-1003">Cell membrane</keyword>
<keyword id="KW-0472">Membrane</keyword>
<keyword id="KW-0547">Nucleotide-binding</keyword>
<keyword id="KW-0592">Phosphate transport</keyword>
<keyword id="KW-1278">Translocase</keyword>
<keyword id="KW-0813">Transport</keyword>
<comment type="function">
    <text evidence="1">Part of the ABC transporter complex PstSACB involved in phosphate import. Responsible for energy coupling to the transport system.</text>
</comment>
<comment type="catalytic activity">
    <reaction evidence="1">
        <text>phosphate(out) + ATP + H2O = ADP + 2 phosphate(in) + H(+)</text>
        <dbReference type="Rhea" id="RHEA:24440"/>
        <dbReference type="ChEBI" id="CHEBI:15377"/>
        <dbReference type="ChEBI" id="CHEBI:15378"/>
        <dbReference type="ChEBI" id="CHEBI:30616"/>
        <dbReference type="ChEBI" id="CHEBI:43474"/>
        <dbReference type="ChEBI" id="CHEBI:456216"/>
        <dbReference type="EC" id="7.3.2.1"/>
    </reaction>
</comment>
<comment type="subunit">
    <text evidence="1">The complex is composed of two ATP-binding proteins (PstB), two transmembrane proteins (PstC and PstA) and a solute-binding protein (PstS).</text>
</comment>
<comment type="subcellular location">
    <subcellularLocation>
        <location evidence="1">Cell membrane</location>
        <topology evidence="1">Peripheral membrane protein</topology>
    </subcellularLocation>
</comment>
<comment type="similarity">
    <text evidence="1">Belongs to the ABC transporter superfamily. Phosphate importer (TC 3.A.1.7) family.</text>
</comment>
<protein>
    <recommendedName>
        <fullName evidence="1">Phosphate import ATP-binding protein PstB</fullName>
        <ecNumber evidence="1">7.3.2.1</ecNumber>
    </recommendedName>
    <alternativeName>
        <fullName evidence="1">ABC phosphate transporter</fullName>
    </alternativeName>
    <alternativeName>
        <fullName evidence="1">Phosphate-transporting ATPase</fullName>
    </alternativeName>
</protein>
<accession>Q49588</accession>
<evidence type="ECO:0000255" key="1">
    <source>
        <dbReference type="HAMAP-Rule" id="MF_01702"/>
    </source>
</evidence>
<evidence type="ECO:0000256" key="2">
    <source>
        <dbReference type="SAM" id="MobiDB-lite"/>
    </source>
</evidence>
<organism>
    <name type="scientific">Mycobacterium intracellulare</name>
    <dbReference type="NCBI Taxonomy" id="1767"/>
    <lineage>
        <taxon>Bacteria</taxon>
        <taxon>Bacillati</taxon>
        <taxon>Actinomycetota</taxon>
        <taxon>Actinomycetes</taxon>
        <taxon>Mycobacteriales</taxon>
        <taxon>Mycobacteriaceae</taxon>
        <taxon>Mycobacterium</taxon>
        <taxon>Mycobacterium avium complex (MAC)</taxon>
    </lineage>
</organism>
<name>PSTB_MYCIT</name>
<reference key="1">
    <citation type="journal article" date="1996" name="FEMS Microbiol. Lett.">
        <title>Duplication of genes encoding the immunodominant 38 kDa antigen in Mycobacterium intracellulare.</title>
        <authorList>
            <person name="Thangaraj H.S."/>
            <person name="Bull T.J."/>
            <person name="De Smet K.A.L."/>
            <person name="Hill M."/>
            <person name="Rouse D.A."/>
            <person name="Moreno C."/>
            <person name="Ivanyi J."/>
        </authorList>
    </citation>
    <scope>NUCLEOTIDE SEQUENCE [GENOMIC DNA]</scope>
    <source>
        <strain>ATCC 35761 / TMC 1403</strain>
    </source>
</reference>
<dbReference type="EC" id="7.3.2.1" evidence="1"/>
<dbReference type="EMBL" id="X95538">
    <property type="protein sequence ID" value="CAA64782.1"/>
    <property type="molecule type" value="Genomic_DNA"/>
</dbReference>
<dbReference type="SMR" id="Q49588"/>
<dbReference type="GO" id="GO:0005886">
    <property type="term" value="C:plasma membrane"/>
    <property type="evidence" value="ECO:0007669"/>
    <property type="project" value="UniProtKB-SubCell"/>
</dbReference>
<dbReference type="GO" id="GO:0005524">
    <property type="term" value="F:ATP binding"/>
    <property type="evidence" value="ECO:0007669"/>
    <property type="project" value="UniProtKB-KW"/>
</dbReference>
<dbReference type="GO" id="GO:0016887">
    <property type="term" value="F:ATP hydrolysis activity"/>
    <property type="evidence" value="ECO:0007669"/>
    <property type="project" value="InterPro"/>
</dbReference>
<dbReference type="GO" id="GO:0015415">
    <property type="term" value="F:ATPase-coupled phosphate ion transmembrane transporter activity"/>
    <property type="evidence" value="ECO:0007669"/>
    <property type="project" value="UniProtKB-EC"/>
</dbReference>
<dbReference type="GO" id="GO:0035435">
    <property type="term" value="P:phosphate ion transmembrane transport"/>
    <property type="evidence" value="ECO:0007669"/>
    <property type="project" value="InterPro"/>
</dbReference>
<dbReference type="CDD" id="cd03260">
    <property type="entry name" value="ABC_PstB_phosphate_transporter"/>
    <property type="match status" value="1"/>
</dbReference>
<dbReference type="Gene3D" id="3.40.50.300">
    <property type="entry name" value="P-loop containing nucleotide triphosphate hydrolases"/>
    <property type="match status" value="1"/>
</dbReference>
<dbReference type="InterPro" id="IPR003593">
    <property type="entry name" value="AAA+_ATPase"/>
</dbReference>
<dbReference type="InterPro" id="IPR003439">
    <property type="entry name" value="ABC_transporter-like_ATP-bd"/>
</dbReference>
<dbReference type="InterPro" id="IPR017871">
    <property type="entry name" value="ABC_transporter-like_CS"/>
</dbReference>
<dbReference type="InterPro" id="IPR027417">
    <property type="entry name" value="P-loop_NTPase"/>
</dbReference>
<dbReference type="InterPro" id="IPR005670">
    <property type="entry name" value="PstB-like"/>
</dbReference>
<dbReference type="PANTHER" id="PTHR43423">
    <property type="entry name" value="ABC TRANSPORTER I FAMILY MEMBER 17"/>
    <property type="match status" value="1"/>
</dbReference>
<dbReference type="PANTHER" id="PTHR43423:SF1">
    <property type="entry name" value="ABC TRANSPORTER I FAMILY MEMBER 17"/>
    <property type="match status" value="1"/>
</dbReference>
<dbReference type="Pfam" id="PF00005">
    <property type="entry name" value="ABC_tran"/>
    <property type="match status" value="1"/>
</dbReference>
<dbReference type="SMART" id="SM00382">
    <property type="entry name" value="AAA"/>
    <property type="match status" value="1"/>
</dbReference>
<dbReference type="SUPFAM" id="SSF52540">
    <property type="entry name" value="P-loop containing nucleoside triphosphate hydrolases"/>
    <property type="match status" value="1"/>
</dbReference>
<dbReference type="PROSITE" id="PS00211">
    <property type="entry name" value="ABC_TRANSPORTER_1"/>
    <property type="match status" value="1"/>
</dbReference>
<dbReference type="PROSITE" id="PS50893">
    <property type="entry name" value="ABC_TRANSPORTER_2"/>
    <property type="match status" value="1"/>
</dbReference>
<dbReference type="PROSITE" id="PS51238">
    <property type="entry name" value="PSTB"/>
    <property type="match status" value="1"/>
</dbReference>
<sequence>MRREQQLPAAVAAPVADGGQLMRAVDLTLGFGPKTVLEQVSLDFPARSVTTLLGPTGSGKTTFLRTLNRMNDKVSGFRHSGDVLLGGRTIFADRDLMEFRRSVGMLFQRPNPFPMSIMDNVVAGVRAHKMAPRKQFKTVAEARLTEVGLWDAVKDRLGDSPFRLSGGQQQLLCLARALAVNPDVLLLDEPTSSLDPTTTEKIEGLIRSLADRLTVIMVTHDLAQAARTGDRTAFFFEGRLVEEGPTKHLFLSPQHEETVRYFAPFRPAQGSDRGSSQTAGVAESQ</sequence>